<reference key="1">
    <citation type="journal article" date="2004" name="Genome Res.">
        <title>Genome sequence of Haloarcula marismortui: a halophilic archaeon from the Dead Sea.</title>
        <authorList>
            <person name="Baliga N.S."/>
            <person name="Bonneau R."/>
            <person name="Facciotti M.T."/>
            <person name="Pan M."/>
            <person name="Glusman G."/>
            <person name="Deutsch E.W."/>
            <person name="Shannon P."/>
            <person name="Chiu Y."/>
            <person name="Weng R.S."/>
            <person name="Gan R.R."/>
            <person name="Hung P."/>
            <person name="Date S.V."/>
            <person name="Marcotte E."/>
            <person name="Hood L."/>
            <person name="Ng W.V."/>
        </authorList>
    </citation>
    <scope>NUCLEOTIDE SEQUENCE [LARGE SCALE GENOMIC DNA]</scope>
    <source>
        <strain>ATCC 43049 / DSM 3752 / JCM 8966 / VKM B-1809</strain>
    </source>
</reference>
<feature type="chain" id="PRO_1000059159" description="A-type ATP synthase subunit D">
    <location>
        <begin position="1"/>
        <end position="230"/>
    </location>
</feature>
<feature type="region of interest" description="Disordered" evidence="2">
    <location>
        <begin position="204"/>
        <end position="230"/>
    </location>
</feature>
<feature type="compositionally biased region" description="Acidic residues" evidence="2">
    <location>
        <begin position="208"/>
        <end position="230"/>
    </location>
</feature>
<accession>Q5UXY5</accession>
<proteinExistence type="inferred from homology"/>
<evidence type="ECO:0000255" key="1">
    <source>
        <dbReference type="HAMAP-Rule" id="MF_00271"/>
    </source>
</evidence>
<evidence type="ECO:0000256" key="2">
    <source>
        <dbReference type="SAM" id="MobiDB-lite"/>
    </source>
</evidence>
<gene>
    <name evidence="1" type="primary">atpD</name>
    <name type="ordered locus">rrnAC3162</name>
</gene>
<comment type="function">
    <text evidence="1">Component of the A-type ATP synthase that produces ATP from ADP in the presence of a proton gradient across the membrane.</text>
</comment>
<comment type="subunit">
    <text evidence="1">Has multiple subunits with at least A(3), B(3), C, D, E, F, H, I and proteolipid K(x).</text>
</comment>
<comment type="subcellular location">
    <subcellularLocation>
        <location evidence="1">Cell membrane</location>
        <topology evidence="1">Peripheral membrane protein</topology>
    </subcellularLocation>
</comment>
<comment type="similarity">
    <text evidence="1">Belongs to the V-ATPase D subunit family.</text>
</comment>
<organism>
    <name type="scientific">Haloarcula marismortui (strain ATCC 43049 / DSM 3752 / JCM 8966 / VKM B-1809)</name>
    <name type="common">Halobacterium marismortui</name>
    <dbReference type="NCBI Taxonomy" id="272569"/>
    <lineage>
        <taxon>Archaea</taxon>
        <taxon>Methanobacteriati</taxon>
        <taxon>Methanobacteriota</taxon>
        <taxon>Stenosarchaea group</taxon>
        <taxon>Halobacteria</taxon>
        <taxon>Halobacteriales</taxon>
        <taxon>Haloarculaceae</taxon>
        <taxon>Haloarcula</taxon>
    </lineage>
</organism>
<keyword id="KW-0066">ATP synthesis</keyword>
<keyword id="KW-1003">Cell membrane</keyword>
<keyword id="KW-0375">Hydrogen ion transport</keyword>
<keyword id="KW-0406">Ion transport</keyword>
<keyword id="KW-0472">Membrane</keyword>
<keyword id="KW-1185">Reference proteome</keyword>
<keyword id="KW-0813">Transport</keyword>
<name>AATD_HALMA</name>
<protein>
    <recommendedName>
        <fullName evidence="1">A-type ATP synthase subunit D</fullName>
    </recommendedName>
</protein>
<dbReference type="EMBL" id="AY596297">
    <property type="protein sequence ID" value="AAV47868.1"/>
    <property type="molecule type" value="Genomic_DNA"/>
</dbReference>
<dbReference type="RefSeq" id="WP_011224645.1">
    <property type="nucleotide sequence ID" value="NC_006396.1"/>
</dbReference>
<dbReference type="SMR" id="Q5UXY5"/>
<dbReference type="STRING" id="272569.rrnAC3162"/>
<dbReference type="PaxDb" id="272569-rrnAC3162"/>
<dbReference type="EnsemblBacteria" id="AAV47868">
    <property type="protein sequence ID" value="AAV47868"/>
    <property type="gene ID" value="rrnAC3162"/>
</dbReference>
<dbReference type="GeneID" id="40153970"/>
<dbReference type="KEGG" id="hma:rrnAC3162"/>
<dbReference type="PATRIC" id="fig|272569.17.peg.3702"/>
<dbReference type="eggNOG" id="arCOG04101">
    <property type="taxonomic scope" value="Archaea"/>
</dbReference>
<dbReference type="HOGENOM" id="CLU_069688_2_1_2"/>
<dbReference type="Proteomes" id="UP000001169">
    <property type="component" value="Chromosome I"/>
</dbReference>
<dbReference type="GO" id="GO:0005886">
    <property type="term" value="C:plasma membrane"/>
    <property type="evidence" value="ECO:0007669"/>
    <property type="project" value="UniProtKB-SubCell"/>
</dbReference>
<dbReference type="GO" id="GO:0005524">
    <property type="term" value="F:ATP binding"/>
    <property type="evidence" value="ECO:0007669"/>
    <property type="project" value="UniProtKB-UniRule"/>
</dbReference>
<dbReference type="GO" id="GO:0046933">
    <property type="term" value="F:proton-transporting ATP synthase activity, rotational mechanism"/>
    <property type="evidence" value="ECO:0007669"/>
    <property type="project" value="UniProtKB-UniRule"/>
</dbReference>
<dbReference type="GO" id="GO:0046961">
    <property type="term" value="F:proton-transporting ATPase activity, rotational mechanism"/>
    <property type="evidence" value="ECO:0007669"/>
    <property type="project" value="InterPro"/>
</dbReference>
<dbReference type="GO" id="GO:0042777">
    <property type="term" value="P:proton motive force-driven plasma membrane ATP synthesis"/>
    <property type="evidence" value="ECO:0007669"/>
    <property type="project" value="UniProtKB-UniRule"/>
</dbReference>
<dbReference type="FunFam" id="1.10.287.3240:FF:000007">
    <property type="entry name" value="V-type ATP synthase subunit D"/>
    <property type="match status" value="1"/>
</dbReference>
<dbReference type="Gene3D" id="1.10.287.3240">
    <property type="match status" value="1"/>
</dbReference>
<dbReference type="HAMAP" id="MF_00271">
    <property type="entry name" value="ATP_synth_D_arch"/>
    <property type="match status" value="1"/>
</dbReference>
<dbReference type="InterPro" id="IPR002699">
    <property type="entry name" value="V_ATPase_D"/>
</dbReference>
<dbReference type="NCBIfam" id="NF001542">
    <property type="entry name" value="PRK00373.1-1"/>
    <property type="match status" value="1"/>
</dbReference>
<dbReference type="NCBIfam" id="NF001545">
    <property type="entry name" value="PRK00373.1-4"/>
    <property type="match status" value="1"/>
</dbReference>
<dbReference type="NCBIfam" id="TIGR00309">
    <property type="entry name" value="V_ATPase_subD"/>
    <property type="match status" value="1"/>
</dbReference>
<dbReference type="PANTHER" id="PTHR11671">
    <property type="entry name" value="V-TYPE ATP SYNTHASE SUBUNIT D"/>
    <property type="match status" value="1"/>
</dbReference>
<dbReference type="Pfam" id="PF01813">
    <property type="entry name" value="ATP-synt_D"/>
    <property type="match status" value="1"/>
</dbReference>
<sequence>MAKDVKPTRKNLMQIEDRIELSERGHDTLEKKRDGLIMEFMDILDQAQDVREDLDGSYERAQRAINMARAMEGDVAVRGAAAALKEHPELTTQSKNIMGVVVPQIESSKVRKSLDERGYGVMGTSARIDEAAEAYEELLENIILAAEVETAMKKMLEEIETTKRRVNALEFKLLPDLYDNQEYIEQKLEEQEREEIFRMKKIKAKKEEEEDALAAEEEAEEEPEAVTADD</sequence>